<organism>
    <name type="scientific">Saccharomyces cerevisiae (strain RM11-1a)</name>
    <name type="common">Baker's yeast</name>
    <dbReference type="NCBI Taxonomy" id="285006"/>
    <lineage>
        <taxon>Eukaryota</taxon>
        <taxon>Fungi</taxon>
        <taxon>Dikarya</taxon>
        <taxon>Ascomycota</taxon>
        <taxon>Saccharomycotina</taxon>
        <taxon>Saccharomycetes</taxon>
        <taxon>Saccharomycetales</taxon>
        <taxon>Saccharomycetaceae</taxon>
        <taxon>Saccharomyces</taxon>
    </lineage>
</organism>
<reference key="1">
    <citation type="submission" date="2005-03" db="EMBL/GenBank/DDBJ databases">
        <title>Annotation of the Saccharomyces cerevisiae RM11-1a genome.</title>
        <authorList>
            <consortium name="The Broad Institute Genome Sequencing Platform"/>
            <person name="Birren B.W."/>
            <person name="Lander E.S."/>
            <person name="Galagan J.E."/>
            <person name="Nusbaum C."/>
            <person name="Devon K."/>
            <person name="Cuomo C."/>
            <person name="Jaffe D.B."/>
            <person name="Butler J."/>
            <person name="Alvarez P."/>
            <person name="Gnerre S."/>
            <person name="Grabherr M."/>
            <person name="Kleber M."/>
            <person name="Mauceli E.W."/>
            <person name="Brockman W."/>
            <person name="MacCallum I.A."/>
            <person name="Rounsley S."/>
            <person name="Young S.K."/>
            <person name="LaButti K."/>
            <person name="Pushparaj V."/>
            <person name="DeCaprio D."/>
            <person name="Crawford M."/>
            <person name="Koehrsen M."/>
            <person name="Engels R."/>
            <person name="Montgomery P."/>
            <person name="Pearson M."/>
            <person name="Howarth C."/>
            <person name="Larson L."/>
            <person name="Luoma S."/>
            <person name="White J."/>
            <person name="O'Leary S."/>
            <person name="Kodira C.D."/>
            <person name="Zeng Q."/>
            <person name="Yandava C."/>
            <person name="Alvarado L."/>
            <person name="Pratt S."/>
            <person name="Kruglyak L."/>
        </authorList>
    </citation>
    <scope>NUCLEOTIDE SEQUENCE [LARGE SCALE GENOMIC DNA]</scope>
    <source>
        <strain>RM11-1a</strain>
    </source>
</reference>
<accession>B3LGZ3</accession>
<evidence type="ECO:0000255" key="1">
    <source>
        <dbReference type="HAMAP-Rule" id="MF_03112"/>
    </source>
</evidence>
<feature type="chain" id="PRO_0000388229" description="ATPase GET3">
    <location>
        <begin position="1"/>
        <end position="354"/>
    </location>
</feature>
<feature type="active site" evidence="1">
    <location>
        <position position="57"/>
    </location>
</feature>
<feature type="binding site" evidence="1">
    <location>
        <begin position="26"/>
        <end position="33"/>
    </location>
    <ligand>
        <name>ATP</name>
        <dbReference type="ChEBI" id="CHEBI:30616"/>
    </ligand>
</feature>
<feature type="binding site" evidence="1">
    <location>
        <position position="245"/>
    </location>
    <ligand>
        <name>ATP</name>
        <dbReference type="ChEBI" id="CHEBI:30616"/>
    </ligand>
</feature>
<feature type="binding site" evidence="1">
    <location>
        <position position="272"/>
    </location>
    <ligand>
        <name>ATP</name>
        <dbReference type="ChEBI" id="CHEBI:30616"/>
    </ligand>
</feature>
<feature type="binding site" evidence="1">
    <location>
        <position position="285"/>
    </location>
    <ligand>
        <name>Zn(2+)</name>
        <dbReference type="ChEBI" id="CHEBI:29105"/>
        <note>ligand shared between dimeric partners</note>
    </ligand>
</feature>
<feature type="binding site" evidence="1">
    <location>
        <position position="288"/>
    </location>
    <ligand>
        <name>Zn(2+)</name>
        <dbReference type="ChEBI" id="CHEBI:29105"/>
        <note>ligand shared between dimeric partners</note>
    </ligand>
</feature>
<keyword id="KW-0059">Arsenical resistance</keyword>
<keyword id="KW-0067">ATP-binding</keyword>
<keyword id="KW-0963">Cytoplasm</keyword>
<keyword id="KW-0256">Endoplasmic reticulum</keyword>
<keyword id="KW-0931">ER-Golgi transport</keyword>
<keyword id="KW-0333">Golgi apparatus</keyword>
<keyword id="KW-0378">Hydrolase</keyword>
<keyword id="KW-0479">Metal-binding</keyword>
<keyword id="KW-0547">Nucleotide-binding</keyword>
<keyword id="KW-0813">Transport</keyword>
<keyword id="KW-0862">Zinc</keyword>
<proteinExistence type="inferred from homology"/>
<dbReference type="EC" id="3.6.-.-" evidence="1"/>
<dbReference type="EMBL" id="CH408043">
    <property type="protein sequence ID" value="EDV08372.1"/>
    <property type="molecule type" value="Genomic_DNA"/>
</dbReference>
<dbReference type="SMR" id="B3LGZ3"/>
<dbReference type="HOGENOM" id="CLU_040761_0_0_1"/>
<dbReference type="OrthoDB" id="23059at4893"/>
<dbReference type="Proteomes" id="UP000008335">
    <property type="component" value="Unassembled WGS sequence"/>
</dbReference>
<dbReference type="GO" id="GO:0043529">
    <property type="term" value="C:GET complex"/>
    <property type="evidence" value="ECO:0007669"/>
    <property type="project" value="UniProtKB-UniRule"/>
</dbReference>
<dbReference type="GO" id="GO:0005794">
    <property type="term" value="C:Golgi apparatus"/>
    <property type="evidence" value="ECO:0007669"/>
    <property type="project" value="UniProtKB-SubCell"/>
</dbReference>
<dbReference type="GO" id="GO:0005524">
    <property type="term" value="F:ATP binding"/>
    <property type="evidence" value="ECO:0007669"/>
    <property type="project" value="UniProtKB-UniRule"/>
</dbReference>
<dbReference type="GO" id="GO:0016887">
    <property type="term" value="F:ATP hydrolysis activity"/>
    <property type="evidence" value="ECO:0007669"/>
    <property type="project" value="InterPro"/>
</dbReference>
<dbReference type="GO" id="GO:0046872">
    <property type="term" value="F:metal ion binding"/>
    <property type="evidence" value="ECO:0007669"/>
    <property type="project" value="UniProtKB-KW"/>
</dbReference>
<dbReference type="GO" id="GO:0046685">
    <property type="term" value="P:response to arsenic-containing substance"/>
    <property type="evidence" value="ECO:0007669"/>
    <property type="project" value="UniProtKB-KW"/>
</dbReference>
<dbReference type="GO" id="GO:0071816">
    <property type="term" value="P:tail-anchored membrane protein insertion into ER membrane"/>
    <property type="evidence" value="ECO:0007669"/>
    <property type="project" value="TreeGrafter"/>
</dbReference>
<dbReference type="GO" id="GO:0016192">
    <property type="term" value="P:vesicle-mediated transport"/>
    <property type="evidence" value="ECO:0007669"/>
    <property type="project" value="UniProtKB-KW"/>
</dbReference>
<dbReference type="CDD" id="cd02035">
    <property type="entry name" value="ArsA"/>
    <property type="match status" value="1"/>
</dbReference>
<dbReference type="FunFam" id="3.40.50.300:FF:001359">
    <property type="entry name" value="ATPase GET3"/>
    <property type="match status" value="1"/>
</dbReference>
<dbReference type="Gene3D" id="3.40.50.300">
    <property type="entry name" value="P-loop containing nucleotide triphosphate hydrolases"/>
    <property type="match status" value="1"/>
</dbReference>
<dbReference type="HAMAP" id="MF_03112">
    <property type="entry name" value="Asna1_Get3"/>
    <property type="match status" value="1"/>
</dbReference>
<dbReference type="InterPro" id="IPR025723">
    <property type="entry name" value="Anion-transp_ATPase-like_dom"/>
</dbReference>
<dbReference type="InterPro" id="IPR016300">
    <property type="entry name" value="ATPase_ArsA/GET3"/>
</dbReference>
<dbReference type="InterPro" id="IPR027542">
    <property type="entry name" value="ATPase_ArsA/GET3_euk"/>
</dbReference>
<dbReference type="InterPro" id="IPR027417">
    <property type="entry name" value="P-loop_NTPase"/>
</dbReference>
<dbReference type="NCBIfam" id="TIGR00345">
    <property type="entry name" value="GET3_arsA_TRC40"/>
    <property type="match status" value="1"/>
</dbReference>
<dbReference type="PANTHER" id="PTHR10803">
    <property type="entry name" value="ARSENICAL PUMP-DRIVING ATPASE ARSENITE-TRANSLOCATING ATPASE"/>
    <property type="match status" value="1"/>
</dbReference>
<dbReference type="PANTHER" id="PTHR10803:SF3">
    <property type="entry name" value="ATPASE GET3"/>
    <property type="match status" value="1"/>
</dbReference>
<dbReference type="Pfam" id="PF02374">
    <property type="entry name" value="ArsA_ATPase"/>
    <property type="match status" value="1"/>
</dbReference>
<dbReference type="SUPFAM" id="SSF52540">
    <property type="entry name" value="P-loop containing nucleoside triphosphate hydrolases"/>
    <property type="match status" value="1"/>
</dbReference>
<gene>
    <name evidence="1" type="primary">GET3</name>
    <name type="ORF">SCRG_00595</name>
</gene>
<name>GET3_YEAS1</name>
<comment type="function">
    <text evidence="1">ATPase required for the post-translational delivery of tail-anchored (TA) proteins to the endoplasmic reticulum. Recognizes and selectively binds the transmembrane domain of TA proteins in the cytosol. This complex then targets to the endoplasmic reticulum by membrane-bound receptors GET1 and GET2, where the tail-anchored protein is released for insertion. This process is regulated by ATP binding and hydrolysis. ATP binding drives the homodimer towards the closed dimer state, facilitating recognition of newly synthesized TA membrane proteins. ATP hydrolysis is required for insertion. Subsequently, the homodimer reverts towards the open dimer state, lowering its affinity for the GET1-GET2 receptor, and returning it to the cytosol to initiate a new round of targeting. Cooperates with the HDEL receptor ERD2 to mediate the ATP-dependent retrieval of resident ER proteins that contain a C-terminal H-D-E-L retention signal from the Golgi to the ER. Involved in low-level resistance to the oxyanions arsenite and arsenate, and in heat tolerance.</text>
</comment>
<comment type="subunit">
    <text evidence="1">Homodimer. Component of the Golgi to ER traffic (GET) complex, which is composed of GET1, GET2 and GET3. Within the complex, GET1 and GET2 form a heterotetramer which is stabilized by phosphatidylinositol binding and which binds to the GET3 homodimer. Interacts with the chloride channel protein GEF1.</text>
</comment>
<comment type="subcellular location">
    <subcellularLocation>
        <location evidence="1">Cytoplasm</location>
    </subcellularLocation>
    <subcellularLocation>
        <location evidence="1">Endoplasmic reticulum</location>
    </subcellularLocation>
    <subcellularLocation>
        <location evidence="1">Golgi apparatus</location>
    </subcellularLocation>
    <text evidence="1">GET1 and GET2 are required for targeting GET3 to the endoplasmic reticulum.</text>
</comment>
<comment type="similarity">
    <text evidence="1">Belongs to the arsA ATPase family.</text>
</comment>
<sequence length="354" mass="39354">MDLTVEPNLHSLITSTTHKWIFVGGKGGVGKTTSSCSIAIQMALSQPNKQFLLISTDPAHNLSDAFGEKFGKDARKVTGMNNLSCMEIDPSAALKDMNDMAVSRANNNGSDGQGDDLGSLLQGGALADLTGSIPGIDEALSFMEVMKHIKRQEQGEGETFDTVIFDTAPTGHTLRFLQLPNTLSKLLEKFGEITNKLGPMLNSFMGAGNVDISGKLNELKANVETIRQQFTDPDLTTFVCVCISEFLSLYETERLIQELISYDMDVNSIIVNQLLFAENDQEHNCKRCQARWKMQKKYLDQIDELYEDFHVVKMPLCAGEIRGLNNLTKFSQFLNKEYNPITDGKVIYELEDKE</sequence>
<protein>
    <recommendedName>
        <fullName evidence="1">ATPase GET3</fullName>
        <ecNumber evidence="1">3.6.-.-</ecNumber>
    </recommendedName>
    <alternativeName>
        <fullName evidence="1">Arsenical pump-driving ATPase</fullName>
    </alternativeName>
    <alternativeName>
        <fullName evidence="1">Arsenite-stimulated ATPase</fullName>
    </alternativeName>
    <alternativeName>
        <fullName evidence="1">Golgi to ER traffic protein 3</fullName>
    </alternativeName>
    <alternativeName>
        <fullName evidence="1">Guided entry of tail-anchored proteins 3</fullName>
    </alternativeName>
</protein>